<sequence length="625" mass="68087">MGFSKIALFSLFALFGLPTSLAKSSEEWRDRIIYQVITDRFAVDSDNTPDCSFDDSSYCGGTWSGIRSKLDYIQGMGFNAIWISPVEKNLEGSYGSDGEAYHGYWNTDFTQLNEHFGSEDDLIDLITDMHNRDMWIMFDALANSMAIPGPTDNISYSNLVPFNDSSYFHPYCWIDYGSNNNTDIEDCWTGDDNVILADLDIESTNVADYLHEHIHDMVERYQIDGIRIDAVKQMNPEFFPNYTSAAGVFAIGEMFSYDPNVSCSVRNYLDSITSYPIRQGIEFAFNYTGAAFEYLQEIDTQFQQACEGQDMSVIGNFLENHDLPRYTSITNDTSQDIGAIVFLLLHTGIPIIYYGEEQRLPGGSDTPENRAALWNYGYDTDANYYQTIRTAIALRKQAISDSDSWTTDSHSYLDYDLRHAVVRKGDVLGVYTNYESSSDNVTYDVSSNFDDGTVLREVLSNTTTTVGSSGALHVTVVSGLPQVYYPEASLTSFGNFLGTATSYSSASASYPSTSMSASLSSVHTSSATSSSKSSSSSSSRSGSSSSSSSRSGSTSSSGSSHTITSTSQSVHTSGSSTSTSSVAVTSTAYSSSSSSSSSSSIESSANAVRVSILGVAAFIAIVLFI</sequence>
<protein>
    <recommendedName>
        <fullName>Alpha-amylase 1</fullName>
        <ecNumber>3.2.1.1</ecNumber>
    </recommendedName>
    <alternativeName>
        <fullName>1,4-alpha-D-glucan glucanohydrolase</fullName>
    </alternativeName>
</protein>
<keyword id="KW-0106">Calcium</keyword>
<keyword id="KW-0119">Carbohydrate metabolism</keyword>
<keyword id="KW-1003">Cell membrane</keyword>
<keyword id="KW-1015">Disulfide bond</keyword>
<keyword id="KW-0325">Glycoprotein</keyword>
<keyword id="KW-0326">Glycosidase</keyword>
<keyword id="KW-0336">GPI-anchor</keyword>
<keyword id="KW-0378">Hydrolase</keyword>
<keyword id="KW-0449">Lipoprotein</keyword>
<keyword id="KW-0472">Membrane</keyword>
<keyword id="KW-0479">Metal-binding</keyword>
<keyword id="KW-1185">Reference proteome</keyword>
<keyword id="KW-0732">Signal</keyword>
<dbReference type="EC" id="3.2.1.1"/>
<dbReference type="EMBL" id="CU329672">
    <property type="protein sequence ID" value="CAA21237.1"/>
    <property type="molecule type" value="Genomic_DNA"/>
</dbReference>
<dbReference type="PIR" id="T41603">
    <property type="entry name" value="T41603"/>
</dbReference>
<dbReference type="RefSeq" id="NP_587687.1">
    <property type="nucleotide sequence ID" value="NM_001022682.2"/>
</dbReference>
<dbReference type="SMR" id="O74922"/>
<dbReference type="BioGRID" id="275406">
    <property type="interactions" value="10"/>
</dbReference>
<dbReference type="FunCoup" id="O74922">
    <property type="interactions" value="128"/>
</dbReference>
<dbReference type="STRING" id="284812.O74922"/>
<dbReference type="CAZy" id="GH13">
    <property type="family name" value="Glycoside Hydrolase Family 13"/>
</dbReference>
<dbReference type="GlyCosmos" id="O74922">
    <property type="glycosylation" value="9 sites, No reported glycans"/>
</dbReference>
<dbReference type="iPTMnet" id="O74922"/>
<dbReference type="PaxDb" id="4896-SPCC757.12.1"/>
<dbReference type="EnsemblFungi" id="SPCC757.12.1">
    <property type="protein sequence ID" value="SPCC757.12.1:pep"/>
    <property type="gene ID" value="SPCC757.12"/>
</dbReference>
<dbReference type="GeneID" id="2538825"/>
<dbReference type="KEGG" id="spo:2538825"/>
<dbReference type="PomBase" id="SPCC757.12">
    <property type="gene designation" value="aah1"/>
</dbReference>
<dbReference type="VEuPathDB" id="FungiDB:SPCC757.12"/>
<dbReference type="eggNOG" id="KOG0471">
    <property type="taxonomic scope" value="Eukaryota"/>
</dbReference>
<dbReference type="HOGENOM" id="CLU_006462_7_2_1"/>
<dbReference type="InParanoid" id="O74922"/>
<dbReference type="OMA" id="NAQLCQT"/>
<dbReference type="PhylomeDB" id="O74922"/>
<dbReference type="PRO" id="PR:O74922"/>
<dbReference type="Proteomes" id="UP000002485">
    <property type="component" value="Chromosome III"/>
</dbReference>
<dbReference type="GO" id="GO:0009897">
    <property type="term" value="C:external side of plasma membrane"/>
    <property type="evidence" value="ECO:0000304"/>
    <property type="project" value="PomBase"/>
</dbReference>
<dbReference type="GO" id="GO:0009277">
    <property type="term" value="C:fungal-type cell wall"/>
    <property type="evidence" value="ECO:0000250"/>
    <property type="project" value="PomBase"/>
</dbReference>
<dbReference type="GO" id="GO:0004556">
    <property type="term" value="F:alpha-amylase activity"/>
    <property type="evidence" value="ECO:0007669"/>
    <property type="project" value="UniProtKB-EC"/>
</dbReference>
<dbReference type="GO" id="GO:0005509">
    <property type="term" value="F:calcium ion binding"/>
    <property type="evidence" value="ECO:0007669"/>
    <property type="project" value="InterPro"/>
</dbReference>
<dbReference type="GO" id="GO:0016052">
    <property type="term" value="P:carbohydrate catabolic process"/>
    <property type="evidence" value="ECO:0007669"/>
    <property type="project" value="InterPro"/>
</dbReference>
<dbReference type="CDD" id="cd11319">
    <property type="entry name" value="AmyAc_euk_AmyA"/>
    <property type="match status" value="1"/>
</dbReference>
<dbReference type="FunFam" id="2.60.40.1180:FF:000037">
    <property type="entry name" value="Alpha-amylase A"/>
    <property type="match status" value="1"/>
</dbReference>
<dbReference type="FunFam" id="3.20.20.80:FF:000120">
    <property type="entry name" value="Alpha-amylase A"/>
    <property type="match status" value="1"/>
</dbReference>
<dbReference type="Gene3D" id="3.20.20.80">
    <property type="entry name" value="Glycosidases"/>
    <property type="match status" value="1"/>
</dbReference>
<dbReference type="Gene3D" id="2.60.40.1180">
    <property type="entry name" value="Golgi alpha-mannosidase II"/>
    <property type="match status" value="1"/>
</dbReference>
<dbReference type="InterPro" id="IPR015340">
    <property type="entry name" value="A_amylase_C_dom"/>
</dbReference>
<dbReference type="InterPro" id="IPR006047">
    <property type="entry name" value="Glyco_hydro_13_cat_dom"/>
</dbReference>
<dbReference type="InterPro" id="IPR013780">
    <property type="entry name" value="Glyco_hydro_b"/>
</dbReference>
<dbReference type="InterPro" id="IPR017853">
    <property type="entry name" value="Glycoside_hydrolase_SF"/>
</dbReference>
<dbReference type="PANTHER" id="PTHR10357:SF215">
    <property type="entry name" value="ALPHA-AMYLASE 1"/>
    <property type="match status" value="1"/>
</dbReference>
<dbReference type="PANTHER" id="PTHR10357">
    <property type="entry name" value="ALPHA-AMYLASE FAMILY MEMBER"/>
    <property type="match status" value="1"/>
</dbReference>
<dbReference type="Pfam" id="PF09260">
    <property type="entry name" value="A_amylase_dom_C"/>
    <property type="match status" value="1"/>
</dbReference>
<dbReference type="Pfam" id="PF00128">
    <property type="entry name" value="Alpha-amylase"/>
    <property type="match status" value="1"/>
</dbReference>
<dbReference type="SMART" id="SM00642">
    <property type="entry name" value="Aamy"/>
    <property type="match status" value="1"/>
</dbReference>
<dbReference type="SUPFAM" id="SSF51445">
    <property type="entry name" value="(Trans)glycosidases"/>
    <property type="match status" value="1"/>
</dbReference>
<dbReference type="SUPFAM" id="SSF51011">
    <property type="entry name" value="Glycosyl hydrolase domain"/>
    <property type="match status" value="1"/>
</dbReference>
<feature type="signal peptide" evidence="3">
    <location>
        <begin position="1"/>
        <end position="22"/>
    </location>
</feature>
<feature type="chain" id="PRO_0000374015" description="Alpha-amylase 1">
    <location>
        <begin position="23"/>
        <end position="603"/>
    </location>
</feature>
<feature type="propeptide" id="PRO_0000374016" description="Removed in mature form" evidence="3">
    <location>
        <begin position="604"/>
        <end position="625"/>
    </location>
</feature>
<feature type="region of interest" description="Disordered" evidence="4">
    <location>
        <begin position="526"/>
        <end position="579"/>
    </location>
</feature>
<feature type="active site" description="Nucleophile" evidence="2">
    <location>
        <position position="229"/>
    </location>
</feature>
<feature type="active site" description="Proton donor" evidence="2">
    <location>
        <position position="253"/>
    </location>
</feature>
<feature type="binding site" evidence="1">
    <location>
        <position position="105"/>
    </location>
    <ligand>
        <name>substrate</name>
    </ligand>
</feature>
<feature type="binding site" evidence="1">
    <location>
        <position position="143"/>
    </location>
    <ligand>
        <name>Ca(2+)</name>
        <dbReference type="ChEBI" id="CHEBI:29108"/>
        <label>1</label>
    </ligand>
</feature>
<feature type="binding site" evidence="2">
    <location>
        <position position="185"/>
    </location>
    <ligand>
        <name>Ca(2+)</name>
        <dbReference type="ChEBI" id="CHEBI:29108"/>
        <label>1</label>
    </ligand>
</feature>
<feature type="binding site" evidence="2">
    <location>
        <position position="198"/>
    </location>
    <ligand>
        <name>Ca(2+)</name>
        <dbReference type="ChEBI" id="CHEBI:29108"/>
        <label>1</label>
    </ligand>
</feature>
<feature type="binding site" evidence="1">
    <location>
        <position position="227"/>
    </location>
    <ligand>
        <name>substrate</name>
    </ligand>
</feature>
<feature type="binding site" evidence="1">
    <location>
        <position position="229"/>
    </location>
    <ligand>
        <name>Ca(2+)</name>
        <dbReference type="ChEBI" id="CHEBI:29108"/>
        <label>2</label>
    </ligand>
</feature>
<feature type="binding site" evidence="1">
    <location>
        <begin position="232"/>
        <end position="233"/>
    </location>
    <ligand>
        <name>substrate</name>
    </ligand>
</feature>
<feature type="binding site" evidence="1">
    <location>
        <position position="253"/>
    </location>
    <ligand>
        <name>Ca(2+)</name>
        <dbReference type="ChEBI" id="CHEBI:29108"/>
        <label>2</label>
    </ligand>
</feature>
<feature type="binding site" evidence="1">
    <location>
        <position position="322"/>
    </location>
    <ligand>
        <name>substrate</name>
    </ligand>
</feature>
<feature type="binding site" evidence="1">
    <location>
        <position position="370"/>
    </location>
    <ligand>
        <name>substrate</name>
    </ligand>
</feature>
<feature type="site" description="Transition state stabilizer" evidence="1">
    <location>
        <position position="322"/>
    </location>
</feature>
<feature type="lipid moiety-binding region" description="GPI-anchor amidated serine" evidence="3">
    <location>
        <position position="603"/>
    </location>
</feature>
<feature type="glycosylation site" description="N-linked (GlcNAc...) asparagine" evidence="3">
    <location>
        <position position="153"/>
    </location>
</feature>
<feature type="glycosylation site" description="N-linked (GlcNAc...) asparagine" evidence="3">
    <location>
        <position position="163"/>
    </location>
</feature>
<feature type="glycosylation site" description="N-linked (GlcNAc...) asparagine" evidence="3">
    <location>
        <position position="180"/>
    </location>
</feature>
<feature type="glycosylation site" description="N-linked (GlcNAc...) asparagine" evidence="3">
    <location>
        <position position="241"/>
    </location>
</feature>
<feature type="glycosylation site" description="N-linked (GlcNAc...) asparagine" evidence="3">
    <location>
        <position position="260"/>
    </location>
</feature>
<feature type="glycosylation site" description="N-linked (GlcNAc...) asparagine" evidence="3">
    <location>
        <position position="286"/>
    </location>
</feature>
<feature type="glycosylation site" description="N-linked (GlcNAc...) asparagine" evidence="3">
    <location>
        <position position="331"/>
    </location>
</feature>
<feature type="glycosylation site" description="N-linked (GlcNAc...) asparagine" evidence="3">
    <location>
        <position position="440"/>
    </location>
</feature>
<feature type="glycosylation site" description="N-linked (GlcNAc...) asparagine" evidence="3">
    <location>
        <position position="461"/>
    </location>
</feature>
<feature type="disulfide bond" evidence="2">
    <location>
        <begin position="51"/>
        <end position="59"/>
    </location>
</feature>
<feature type="disulfide bond" evidence="2">
    <location>
        <begin position="172"/>
        <end position="187"/>
    </location>
</feature>
<feature type="disulfide bond" evidence="2">
    <location>
        <begin position="263"/>
        <end position="306"/>
    </location>
</feature>
<proteinExistence type="inferred from homology"/>
<evidence type="ECO:0000250" key="1">
    <source>
        <dbReference type="UniProtKB" id="P0C1B3"/>
    </source>
</evidence>
<evidence type="ECO:0000250" key="2">
    <source>
        <dbReference type="UniProtKB" id="P56271"/>
    </source>
</evidence>
<evidence type="ECO:0000255" key="3"/>
<evidence type="ECO:0000256" key="4">
    <source>
        <dbReference type="SAM" id="MobiDB-lite"/>
    </source>
</evidence>
<evidence type="ECO:0000305" key="5"/>
<comment type="catalytic activity">
    <reaction>
        <text>Endohydrolysis of (1-&gt;4)-alpha-D-glucosidic linkages in polysaccharides containing three or more (1-&gt;4)-alpha-linked D-glucose units.</text>
        <dbReference type="EC" id="3.2.1.1"/>
    </reaction>
</comment>
<comment type="cofactor">
    <cofactor evidence="1">
        <name>Ca(2+)</name>
        <dbReference type="ChEBI" id="CHEBI:29108"/>
    </cofactor>
    <text evidence="1">Binds 2 calcium ions per subunit. Calcium is inhibitory at high concentrations.</text>
</comment>
<comment type="subcellular location">
    <subcellularLocation>
        <location evidence="5">Cell membrane</location>
        <topology evidence="5">Lipid-anchor</topology>
        <topology evidence="5">GPI-anchor</topology>
    </subcellularLocation>
</comment>
<comment type="similarity">
    <text evidence="5">Belongs to the glycosyl hydrolase 13 family.</text>
</comment>
<name>AMY1_SCHPO</name>
<gene>
    <name type="primary">aah1</name>
    <name type="ORF">SPCC757.12</name>
</gene>
<organism>
    <name type="scientific">Schizosaccharomyces pombe (strain 972 / ATCC 24843)</name>
    <name type="common">Fission yeast</name>
    <dbReference type="NCBI Taxonomy" id="284812"/>
    <lineage>
        <taxon>Eukaryota</taxon>
        <taxon>Fungi</taxon>
        <taxon>Dikarya</taxon>
        <taxon>Ascomycota</taxon>
        <taxon>Taphrinomycotina</taxon>
        <taxon>Schizosaccharomycetes</taxon>
        <taxon>Schizosaccharomycetales</taxon>
        <taxon>Schizosaccharomycetaceae</taxon>
        <taxon>Schizosaccharomyces</taxon>
    </lineage>
</organism>
<accession>O74922</accession>
<reference key="1">
    <citation type="journal article" date="2002" name="Nature">
        <title>The genome sequence of Schizosaccharomyces pombe.</title>
        <authorList>
            <person name="Wood V."/>
            <person name="Gwilliam R."/>
            <person name="Rajandream M.A."/>
            <person name="Lyne M.H."/>
            <person name="Lyne R."/>
            <person name="Stewart A."/>
            <person name="Sgouros J.G."/>
            <person name="Peat N."/>
            <person name="Hayles J."/>
            <person name="Baker S.G."/>
            <person name="Basham D."/>
            <person name="Bowman S."/>
            <person name="Brooks K."/>
            <person name="Brown D."/>
            <person name="Brown S."/>
            <person name="Chillingworth T."/>
            <person name="Churcher C.M."/>
            <person name="Collins M."/>
            <person name="Connor R."/>
            <person name="Cronin A."/>
            <person name="Davis P."/>
            <person name="Feltwell T."/>
            <person name="Fraser A."/>
            <person name="Gentles S."/>
            <person name="Goble A."/>
            <person name="Hamlin N."/>
            <person name="Harris D.E."/>
            <person name="Hidalgo J."/>
            <person name="Hodgson G."/>
            <person name="Holroyd S."/>
            <person name="Hornsby T."/>
            <person name="Howarth S."/>
            <person name="Huckle E.J."/>
            <person name="Hunt S."/>
            <person name="Jagels K."/>
            <person name="James K.D."/>
            <person name="Jones L."/>
            <person name="Jones M."/>
            <person name="Leather S."/>
            <person name="McDonald S."/>
            <person name="McLean J."/>
            <person name="Mooney P."/>
            <person name="Moule S."/>
            <person name="Mungall K.L."/>
            <person name="Murphy L.D."/>
            <person name="Niblett D."/>
            <person name="Odell C."/>
            <person name="Oliver K."/>
            <person name="O'Neil S."/>
            <person name="Pearson D."/>
            <person name="Quail M.A."/>
            <person name="Rabbinowitsch E."/>
            <person name="Rutherford K.M."/>
            <person name="Rutter S."/>
            <person name="Saunders D."/>
            <person name="Seeger K."/>
            <person name="Sharp S."/>
            <person name="Skelton J."/>
            <person name="Simmonds M.N."/>
            <person name="Squares R."/>
            <person name="Squares S."/>
            <person name="Stevens K."/>
            <person name="Taylor K."/>
            <person name="Taylor R.G."/>
            <person name="Tivey A."/>
            <person name="Walsh S.V."/>
            <person name="Warren T."/>
            <person name="Whitehead S."/>
            <person name="Woodward J.R."/>
            <person name="Volckaert G."/>
            <person name="Aert R."/>
            <person name="Robben J."/>
            <person name="Grymonprez B."/>
            <person name="Weltjens I."/>
            <person name="Vanstreels E."/>
            <person name="Rieger M."/>
            <person name="Schaefer M."/>
            <person name="Mueller-Auer S."/>
            <person name="Gabel C."/>
            <person name="Fuchs M."/>
            <person name="Duesterhoeft A."/>
            <person name="Fritzc C."/>
            <person name="Holzer E."/>
            <person name="Moestl D."/>
            <person name="Hilbert H."/>
            <person name="Borzym K."/>
            <person name="Langer I."/>
            <person name="Beck A."/>
            <person name="Lehrach H."/>
            <person name="Reinhardt R."/>
            <person name="Pohl T.M."/>
            <person name="Eger P."/>
            <person name="Zimmermann W."/>
            <person name="Wedler H."/>
            <person name="Wambutt R."/>
            <person name="Purnelle B."/>
            <person name="Goffeau A."/>
            <person name="Cadieu E."/>
            <person name="Dreano S."/>
            <person name="Gloux S."/>
            <person name="Lelaure V."/>
            <person name="Mottier S."/>
            <person name="Galibert F."/>
            <person name="Aves S.J."/>
            <person name="Xiang Z."/>
            <person name="Hunt C."/>
            <person name="Moore K."/>
            <person name="Hurst S.M."/>
            <person name="Lucas M."/>
            <person name="Rochet M."/>
            <person name="Gaillardin C."/>
            <person name="Tallada V.A."/>
            <person name="Garzon A."/>
            <person name="Thode G."/>
            <person name="Daga R.R."/>
            <person name="Cruzado L."/>
            <person name="Jimenez J."/>
            <person name="Sanchez M."/>
            <person name="del Rey F."/>
            <person name="Benito J."/>
            <person name="Dominguez A."/>
            <person name="Revuelta J.L."/>
            <person name="Moreno S."/>
            <person name="Armstrong J."/>
            <person name="Forsburg S.L."/>
            <person name="Cerutti L."/>
            <person name="Lowe T."/>
            <person name="McCombie W.R."/>
            <person name="Paulsen I."/>
            <person name="Potashkin J."/>
            <person name="Shpakovski G.V."/>
            <person name="Ussery D."/>
            <person name="Barrell B.G."/>
            <person name="Nurse P."/>
        </authorList>
    </citation>
    <scope>NUCLEOTIDE SEQUENCE [LARGE SCALE GENOMIC DNA]</scope>
    <source>
        <strain>972 / ATCC 24843</strain>
    </source>
</reference>
<reference key="2">
    <citation type="journal article" date="2006" name="Biosci. Biotechnol. Biochem.">
        <title>An alpha-amylase homologue, aah3, encodes a GPI-anchored membrane protein required for cell wall integrity and morphogenesis in Schizosaccharomyces pombe.</title>
        <authorList>
            <person name="Morita T."/>
            <person name="Tanaka N."/>
            <person name="Hosomi A."/>
            <person name="Giga-Hama Y."/>
            <person name="Takegawa K."/>
        </authorList>
    </citation>
    <scope>GENE NAME</scope>
</reference>